<comment type="function">
    <text evidence="2">Component of the ubiquinol-cytochrome c reductase complex (complex III or cytochrome b-c1 complex) that is part of the mitochondrial respiratory chain. The b-c1 complex mediates electron transfer from ubiquinol to cytochrome c. Contributes to the generation of a proton gradient across the mitochondrial membrane that is then used for ATP synthesis.</text>
</comment>
<comment type="cofactor">
    <cofactor evidence="2">
        <name>heme b</name>
        <dbReference type="ChEBI" id="CHEBI:60344"/>
    </cofactor>
    <text evidence="2">Binds 2 heme b groups non-covalently.</text>
</comment>
<comment type="subunit">
    <text evidence="2">The cytochrome bc1 complex contains 3 respiratory subunits (MT-CYB, CYC1 and UQCRFS1), 2 core proteins (UQCRC1 and UQCRC2) and probably 6 low-molecular weight proteins.</text>
</comment>
<comment type="subcellular location">
    <subcellularLocation>
        <location evidence="2">Mitochondrion inner membrane</location>
        <topology evidence="2">Multi-pass membrane protein</topology>
    </subcellularLocation>
</comment>
<comment type="miscellaneous">
    <text evidence="1">Heme 1 (or BL or b562) is low-potential and absorbs at about 562 nm, and heme 2 (or BH or b566) is high-potential and absorbs at about 566 nm.</text>
</comment>
<comment type="similarity">
    <text evidence="3 4">Belongs to the cytochrome b family.</text>
</comment>
<comment type="caution">
    <text evidence="2">The full-length protein contains only eight transmembrane helices, not nine as predicted by bioinformatics tools.</text>
</comment>
<feature type="chain" id="PRO_0000061043" description="Cytochrome b">
    <location>
        <begin position="1"/>
        <end position="371"/>
    </location>
</feature>
<feature type="transmembrane region" description="Helical" evidence="2">
    <location>
        <begin position="24"/>
        <end position="44"/>
    </location>
</feature>
<feature type="transmembrane region" description="Helical" evidence="2">
    <location>
        <begin position="68"/>
        <end position="89"/>
    </location>
</feature>
<feature type="transmembrane region" description="Helical" evidence="2">
    <location>
        <begin position="104"/>
        <end position="124"/>
    </location>
</feature>
<feature type="transmembrane region" description="Helical" evidence="2">
    <location>
        <begin position="169"/>
        <end position="189"/>
    </location>
</feature>
<feature type="transmembrane region" description="Helical" evidence="2">
    <location>
        <begin position="217"/>
        <end position="237"/>
    </location>
</feature>
<feature type="transmembrane region" description="Helical" evidence="2">
    <location>
        <begin position="279"/>
        <end position="299"/>
    </location>
</feature>
<feature type="transmembrane region" description="Helical" evidence="2">
    <location>
        <begin position="311"/>
        <end position="331"/>
    </location>
</feature>
<feature type="transmembrane region" description="Helical" evidence="2">
    <location>
        <begin position="338"/>
        <end position="357"/>
    </location>
</feature>
<feature type="binding site" description="axial binding residue" evidence="2">
    <location>
        <position position="74"/>
    </location>
    <ligand>
        <name>heme b</name>
        <dbReference type="ChEBI" id="CHEBI:60344"/>
        <label>b562</label>
    </ligand>
    <ligandPart>
        <name>Fe</name>
        <dbReference type="ChEBI" id="CHEBI:18248"/>
    </ligandPart>
</feature>
<feature type="binding site" description="axial binding residue" evidence="2">
    <location>
        <position position="88"/>
    </location>
    <ligand>
        <name>heme b</name>
        <dbReference type="ChEBI" id="CHEBI:60344"/>
        <label>b566</label>
    </ligand>
    <ligandPart>
        <name>Fe</name>
        <dbReference type="ChEBI" id="CHEBI:18248"/>
    </ligandPart>
</feature>
<feature type="binding site" description="axial binding residue" evidence="2">
    <location>
        <position position="173"/>
    </location>
    <ligand>
        <name>heme b</name>
        <dbReference type="ChEBI" id="CHEBI:60344"/>
        <label>b562</label>
    </ligand>
    <ligandPart>
        <name>Fe</name>
        <dbReference type="ChEBI" id="CHEBI:18248"/>
    </ligandPart>
</feature>
<feature type="binding site" description="axial binding residue" evidence="2">
    <location>
        <position position="187"/>
    </location>
    <ligand>
        <name>heme b</name>
        <dbReference type="ChEBI" id="CHEBI:60344"/>
        <label>b566</label>
    </ligand>
    <ligandPart>
        <name>Fe</name>
        <dbReference type="ChEBI" id="CHEBI:18248"/>
    </ligandPart>
</feature>
<feature type="binding site" evidence="2">
    <location>
        <position position="192"/>
    </location>
    <ligand>
        <name>a ubiquinone</name>
        <dbReference type="ChEBI" id="CHEBI:16389"/>
    </ligand>
</feature>
<geneLocation type="mitochondrion"/>
<organism>
    <name type="scientific">Homoroselaps lacteus</name>
    <name type="common">Spotted harlequin snake</name>
    <dbReference type="NCBI Taxonomy" id="111945"/>
    <lineage>
        <taxon>Eukaryota</taxon>
        <taxon>Metazoa</taxon>
        <taxon>Chordata</taxon>
        <taxon>Craniata</taxon>
        <taxon>Vertebrata</taxon>
        <taxon>Euteleostomi</taxon>
        <taxon>Lepidosauria</taxon>
        <taxon>Squamata</taxon>
        <taxon>Bifurcata</taxon>
        <taxon>Unidentata</taxon>
        <taxon>Episquamata</taxon>
        <taxon>Toxicofera</taxon>
        <taxon>Serpentes</taxon>
        <taxon>Colubroidea</taxon>
        <taxon>Lamprophiidae</taxon>
        <taxon>Atractaspidinae</taxon>
        <taxon>Homoroselaps</taxon>
    </lineage>
</organism>
<accession>Q9MLJ5</accession>
<name>CYB_HOMLA</name>
<reference key="1">
    <citation type="journal article" date="2000" name="Mol. Phylogenet. Evol.">
        <title>Phylogenetic relationships of elapid snakes based on cytochrome b mtDNA sequences.</title>
        <authorList>
            <person name="Slowinski J.B."/>
            <person name="Keogh J.S."/>
        </authorList>
    </citation>
    <scope>NUCLEOTIDE SEQUENCE [GENOMIC DNA]</scope>
</reference>
<gene>
    <name type="primary">MT-CYB</name>
    <name type="synonym">COB</name>
    <name type="synonym">CYTB</name>
    <name type="synonym">MTCYB</name>
</gene>
<sequence>MPHHTLLLFNLLPVSLNISTWWNFGSMLLACLTLQITTGFFLALHYTANVNLAFSSIIHITRDVPYGWTMQNLHSIGASMFFICIYIHIARGLYYSSYLNKEVWLSGITLLATLMATAFFGYVLPWGQMSFWAATVITNLLTAIPYLGTSLTTWLWGGFSINDPTLTRFFALHFILPFAIVSLTSVHIVLLHNEGSSNPLGTNSDIDKIPFHPYHSYKDTLMLTFMITTLFMIMSFAPDLFNDPENFSKANPLITPQHIKPEWYFLFAYGILRSIPNKLGGTLALVMSIAILMTMPFTHTSLVRTMTFRPLSQLMFWTLIATFITITWTATKPVEPPFITIGQLTSILYFSFFMTNPLLGWTENKMMMTNT</sequence>
<protein>
    <recommendedName>
        <fullName>Cytochrome b</fullName>
    </recommendedName>
    <alternativeName>
        <fullName>Complex III subunit 3</fullName>
    </alternativeName>
    <alternativeName>
        <fullName>Complex III subunit III</fullName>
    </alternativeName>
    <alternativeName>
        <fullName>Cytochrome b-c1 complex subunit 3</fullName>
    </alternativeName>
    <alternativeName>
        <fullName>Ubiquinol-cytochrome-c reductase complex cytochrome b subunit</fullName>
    </alternativeName>
</protein>
<dbReference type="EMBL" id="AF217833">
    <property type="protein sequence ID" value="AAF37252.1"/>
    <property type="molecule type" value="Genomic_DNA"/>
</dbReference>
<dbReference type="SMR" id="Q9MLJ5"/>
<dbReference type="GO" id="GO:0005743">
    <property type="term" value="C:mitochondrial inner membrane"/>
    <property type="evidence" value="ECO:0007669"/>
    <property type="project" value="UniProtKB-SubCell"/>
</dbReference>
<dbReference type="GO" id="GO:0045275">
    <property type="term" value="C:respiratory chain complex III"/>
    <property type="evidence" value="ECO:0007669"/>
    <property type="project" value="InterPro"/>
</dbReference>
<dbReference type="GO" id="GO:0046872">
    <property type="term" value="F:metal ion binding"/>
    <property type="evidence" value="ECO:0007669"/>
    <property type="project" value="UniProtKB-KW"/>
</dbReference>
<dbReference type="GO" id="GO:0008121">
    <property type="term" value="F:ubiquinol-cytochrome-c reductase activity"/>
    <property type="evidence" value="ECO:0007669"/>
    <property type="project" value="InterPro"/>
</dbReference>
<dbReference type="GO" id="GO:0006122">
    <property type="term" value="P:mitochondrial electron transport, ubiquinol to cytochrome c"/>
    <property type="evidence" value="ECO:0007669"/>
    <property type="project" value="TreeGrafter"/>
</dbReference>
<dbReference type="CDD" id="cd00290">
    <property type="entry name" value="cytochrome_b_C"/>
    <property type="match status" value="1"/>
</dbReference>
<dbReference type="CDD" id="cd00284">
    <property type="entry name" value="Cytochrome_b_N"/>
    <property type="match status" value="1"/>
</dbReference>
<dbReference type="Gene3D" id="1.20.810.10">
    <property type="entry name" value="Cytochrome Bc1 Complex, Chain C"/>
    <property type="match status" value="1"/>
</dbReference>
<dbReference type="InterPro" id="IPR005798">
    <property type="entry name" value="Cyt_b/b6_C"/>
</dbReference>
<dbReference type="InterPro" id="IPR036150">
    <property type="entry name" value="Cyt_b/b6_C_sf"/>
</dbReference>
<dbReference type="InterPro" id="IPR005797">
    <property type="entry name" value="Cyt_b/b6_N"/>
</dbReference>
<dbReference type="InterPro" id="IPR027387">
    <property type="entry name" value="Cytb/b6-like_sf"/>
</dbReference>
<dbReference type="InterPro" id="IPR030689">
    <property type="entry name" value="Cytochrome_b"/>
</dbReference>
<dbReference type="InterPro" id="IPR048260">
    <property type="entry name" value="Cytochrome_b_C_euk/bac"/>
</dbReference>
<dbReference type="InterPro" id="IPR048259">
    <property type="entry name" value="Cytochrome_b_N_euk/bac"/>
</dbReference>
<dbReference type="InterPro" id="IPR016174">
    <property type="entry name" value="Di-haem_cyt_TM"/>
</dbReference>
<dbReference type="PANTHER" id="PTHR19271">
    <property type="entry name" value="CYTOCHROME B"/>
    <property type="match status" value="1"/>
</dbReference>
<dbReference type="PANTHER" id="PTHR19271:SF16">
    <property type="entry name" value="CYTOCHROME B"/>
    <property type="match status" value="1"/>
</dbReference>
<dbReference type="Pfam" id="PF00032">
    <property type="entry name" value="Cytochrom_B_C"/>
    <property type="match status" value="1"/>
</dbReference>
<dbReference type="Pfam" id="PF00033">
    <property type="entry name" value="Cytochrome_B"/>
    <property type="match status" value="1"/>
</dbReference>
<dbReference type="PIRSF" id="PIRSF038885">
    <property type="entry name" value="COB"/>
    <property type="match status" value="1"/>
</dbReference>
<dbReference type="SUPFAM" id="SSF81648">
    <property type="entry name" value="a domain/subunit of cytochrome bc1 complex (Ubiquinol-cytochrome c reductase)"/>
    <property type="match status" value="1"/>
</dbReference>
<dbReference type="SUPFAM" id="SSF81342">
    <property type="entry name" value="Transmembrane di-heme cytochromes"/>
    <property type="match status" value="1"/>
</dbReference>
<dbReference type="PROSITE" id="PS51003">
    <property type="entry name" value="CYTB_CTER"/>
    <property type="match status" value="1"/>
</dbReference>
<dbReference type="PROSITE" id="PS51002">
    <property type="entry name" value="CYTB_NTER"/>
    <property type="match status" value="1"/>
</dbReference>
<keyword id="KW-0249">Electron transport</keyword>
<keyword id="KW-0349">Heme</keyword>
<keyword id="KW-0408">Iron</keyword>
<keyword id="KW-0472">Membrane</keyword>
<keyword id="KW-0479">Metal-binding</keyword>
<keyword id="KW-0496">Mitochondrion</keyword>
<keyword id="KW-0999">Mitochondrion inner membrane</keyword>
<keyword id="KW-0679">Respiratory chain</keyword>
<keyword id="KW-0812">Transmembrane</keyword>
<keyword id="KW-1133">Transmembrane helix</keyword>
<keyword id="KW-0813">Transport</keyword>
<keyword id="KW-0830">Ubiquinone</keyword>
<evidence type="ECO:0000250" key="1"/>
<evidence type="ECO:0000250" key="2">
    <source>
        <dbReference type="UniProtKB" id="P00157"/>
    </source>
</evidence>
<evidence type="ECO:0000255" key="3">
    <source>
        <dbReference type="PROSITE-ProRule" id="PRU00967"/>
    </source>
</evidence>
<evidence type="ECO:0000255" key="4">
    <source>
        <dbReference type="PROSITE-ProRule" id="PRU00968"/>
    </source>
</evidence>
<proteinExistence type="inferred from homology"/>